<proteinExistence type="inferred from homology"/>
<dbReference type="EC" id="3.1.1.96" evidence="1"/>
<dbReference type="EMBL" id="CP001616">
    <property type="protein sequence ID" value="ACQ91868.1"/>
    <property type="molecule type" value="Genomic_DNA"/>
</dbReference>
<dbReference type="RefSeq" id="WP_012728467.1">
    <property type="nucleotide sequence ID" value="NC_012691.1"/>
</dbReference>
<dbReference type="SMR" id="C4L8J8"/>
<dbReference type="STRING" id="595494.Tola_0238"/>
<dbReference type="KEGG" id="tau:Tola_0238"/>
<dbReference type="eggNOG" id="COG1490">
    <property type="taxonomic scope" value="Bacteria"/>
</dbReference>
<dbReference type="HOGENOM" id="CLU_076901_1_1_6"/>
<dbReference type="OrthoDB" id="9801395at2"/>
<dbReference type="Proteomes" id="UP000009073">
    <property type="component" value="Chromosome"/>
</dbReference>
<dbReference type="GO" id="GO:0005737">
    <property type="term" value="C:cytoplasm"/>
    <property type="evidence" value="ECO:0007669"/>
    <property type="project" value="UniProtKB-SubCell"/>
</dbReference>
<dbReference type="GO" id="GO:0051500">
    <property type="term" value="F:D-tyrosyl-tRNA(Tyr) deacylase activity"/>
    <property type="evidence" value="ECO:0007669"/>
    <property type="project" value="TreeGrafter"/>
</dbReference>
<dbReference type="GO" id="GO:0106026">
    <property type="term" value="F:Gly-tRNA(Ala) deacylase activity"/>
    <property type="evidence" value="ECO:0007669"/>
    <property type="project" value="UniProtKB-UniRule"/>
</dbReference>
<dbReference type="GO" id="GO:0043908">
    <property type="term" value="F:Ser(Gly)-tRNA(Ala) hydrolase activity"/>
    <property type="evidence" value="ECO:0007669"/>
    <property type="project" value="UniProtKB-UniRule"/>
</dbReference>
<dbReference type="GO" id="GO:0000049">
    <property type="term" value="F:tRNA binding"/>
    <property type="evidence" value="ECO:0007669"/>
    <property type="project" value="UniProtKB-UniRule"/>
</dbReference>
<dbReference type="GO" id="GO:0019478">
    <property type="term" value="P:D-amino acid catabolic process"/>
    <property type="evidence" value="ECO:0007669"/>
    <property type="project" value="UniProtKB-UniRule"/>
</dbReference>
<dbReference type="CDD" id="cd00563">
    <property type="entry name" value="Dtyr_deacylase"/>
    <property type="match status" value="1"/>
</dbReference>
<dbReference type="FunFam" id="3.50.80.10:FF:000001">
    <property type="entry name" value="D-aminoacyl-tRNA deacylase"/>
    <property type="match status" value="1"/>
</dbReference>
<dbReference type="Gene3D" id="3.50.80.10">
    <property type="entry name" value="D-tyrosyl-tRNA(Tyr) deacylase"/>
    <property type="match status" value="1"/>
</dbReference>
<dbReference type="HAMAP" id="MF_00518">
    <property type="entry name" value="Deacylase_Dtd"/>
    <property type="match status" value="1"/>
</dbReference>
<dbReference type="InterPro" id="IPR003732">
    <property type="entry name" value="Daa-tRNA_deacyls_DTD"/>
</dbReference>
<dbReference type="InterPro" id="IPR023509">
    <property type="entry name" value="DTD-like_sf"/>
</dbReference>
<dbReference type="NCBIfam" id="TIGR00256">
    <property type="entry name" value="D-aminoacyl-tRNA deacylase"/>
    <property type="match status" value="1"/>
</dbReference>
<dbReference type="PANTHER" id="PTHR10472:SF5">
    <property type="entry name" value="D-AMINOACYL-TRNA DEACYLASE 1"/>
    <property type="match status" value="1"/>
</dbReference>
<dbReference type="PANTHER" id="PTHR10472">
    <property type="entry name" value="D-TYROSYL-TRNA TYR DEACYLASE"/>
    <property type="match status" value="1"/>
</dbReference>
<dbReference type="Pfam" id="PF02580">
    <property type="entry name" value="Tyr_Deacylase"/>
    <property type="match status" value="1"/>
</dbReference>
<dbReference type="SUPFAM" id="SSF69500">
    <property type="entry name" value="DTD-like"/>
    <property type="match status" value="1"/>
</dbReference>
<sequence>MIALIQRVSEARVVVDGAVTGEISNGLLVLLGVERDDDVAKADKLAHRVAGYRVFSDADGKMNLNVQQVNGSILVVSQFTLAADTRKGMRASFAERNADPAVAEALYEHFIAQIAGKEIPVASGRFAADMQVSLVNDGPVTFWLQV</sequence>
<gene>
    <name evidence="1" type="primary">dtd</name>
    <name type="ordered locus">Tola_0238</name>
</gene>
<organism>
    <name type="scientific">Tolumonas auensis (strain DSM 9187 / NBRC 110442 / TA 4)</name>
    <dbReference type="NCBI Taxonomy" id="595494"/>
    <lineage>
        <taxon>Bacteria</taxon>
        <taxon>Pseudomonadati</taxon>
        <taxon>Pseudomonadota</taxon>
        <taxon>Gammaproteobacteria</taxon>
        <taxon>Aeromonadales</taxon>
        <taxon>Aeromonadaceae</taxon>
        <taxon>Tolumonas</taxon>
    </lineage>
</organism>
<accession>C4L8J8</accession>
<evidence type="ECO:0000255" key="1">
    <source>
        <dbReference type="HAMAP-Rule" id="MF_00518"/>
    </source>
</evidence>
<protein>
    <recommendedName>
        <fullName evidence="1">D-aminoacyl-tRNA deacylase</fullName>
        <shortName evidence="1">DTD</shortName>
        <ecNumber evidence="1">3.1.1.96</ecNumber>
    </recommendedName>
    <alternativeName>
        <fullName evidence="1">Gly-tRNA(Ala) deacylase</fullName>
    </alternativeName>
</protein>
<reference key="1">
    <citation type="submission" date="2009-05" db="EMBL/GenBank/DDBJ databases">
        <title>Complete sequence of Tolumonas auensis DSM 9187.</title>
        <authorList>
            <consortium name="US DOE Joint Genome Institute"/>
            <person name="Lucas S."/>
            <person name="Copeland A."/>
            <person name="Lapidus A."/>
            <person name="Glavina del Rio T."/>
            <person name="Tice H."/>
            <person name="Bruce D."/>
            <person name="Goodwin L."/>
            <person name="Pitluck S."/>
            <person name="Chertkov O."/>
            <person name="Brettin T."/>
            <person name="Detter J.C."/>
            <person name="Han C."/>
            <person name="Larimer F."/>
            <person name="Land M."/>
            <person name="Hauser L."/>
            <person name="Kyrpides N."/>
            <person name="Mikhailova N."/>
            <person name="Spring S."/>
            <person name="Beller H."/>
        </authorList>
    </citation>
    <scope>NUCLEOTIDE SEQUENCE [LARGE SCALE GENOMIC DNA]</scope>
    <source>
        <strain>DSM 9187 / NBRC 110442 / TA 4</strain>
    </source>
</reference>
<keyword id="KW-0963">Cytoplasm</keyword>
<keyword id="KW-0378">Hydrolase</keyword>
<keyword id="KW-1185">Reference proteome</keyword>
<keyword id="KW-0694">RNA-binding</keyword>
<keyword id="KW-0820">tRNA-binding</keyword>
<name>DTD_TOLAT</name>
<feature type="chain" id="PRO_1000211739" description="D-aminoacyl-tRNA deacylase">
    <location>
        <begin position="1"/>
        <end position="146"/>
    </location>
</feature>
<feature type="short sequence motif" description="Gly-cisPro motif, important for rejection of L-amino acids" evidence="1">
    <location>
        <begin position="138"/>
        <end position="139"/>
    </location>
</feature>
<comment type="function">
    <text evidence="1">An aminoacyl-tRNA editing enzyme that deacylates mischarged D-aminoacyl-tRNAs. Also deacylates mischarged glycyl-tRNA(Ala), protecting cells against glycine mischarging by AlaRS. Acts via tRNA-based rather than protein-based catalysis; rejects L-amino acids rather than detecting D-amino acids in the active site. By recycling D-aminoacyl-tRNA to D-amino acids and free tRNA molecules, this enzyme counteracts the toxicity associated with the formation of D-aminoacyl-tRNA entities in vivo and helps enforce protein L-homochirality.</text>
</comment>
<comment type="catalytic activity">
    <reaction evidence="1">
        <text>glycyl-tRNA(Ala) + H2O = tRNA(Ala) + glycine + H(+)</text>
        <dbReference type="Rhea" id="RHEA:53744"/>
        <dbReference type="Rhea" id="RHEA-COMP:9657"/>
        <dbReference type="Rhea" id="RHEA-COMP:13640"/>
        <dbReference type="ChEBI" id="CHEBI:15377"/>
        <dbReference type="ChEBI" id="CHEBI:15378"/>
        <dbReference type="ChEBI" id="CHEBI:57305"/>
        <dbReference type="ChEBI" id="CHEBI:78442"/>
        <dbReference type="ChEBI" id="CHEBI:78522"/>
        <dbReference type="EC" id="3.1.1.96"/>
    </reaction>
</comment>
<comment type="catalytic activity">
    <reaction evidence="1">
        <text>a D-aminoacyl-tRNA + H2O = a tRNA + a D-alpha-amino acid + H(+)</text>
        <dbReference type="Rhea" id="RHEA:13953"/>
        <dbReference type="Rhea" id="RHEA-COMP:10123"/>
        <dbReference type="Rhea" id="RHEA-COMP:10124"/>
        <dbReference type="ChEBI" id="CHEBI:15377"/>
        <dbReference type="ChEBI" id="CHEBI:15378"/>
        <dbReference type="ChEBI" id="CHEBI:59871"/>
        <dbReference type="ChEBI" id="CHEBI:78442"/>
        <dbReference type="ChEBI" id="CHEBI:79333"/>
        <dbReference type="EC" id="3.1.1.96"/>
    </reaction>
</comment>
<comment type="subunit">
    <text evidence="1">Homodimer.</text>
</comment>
<comment type="subcellular location">
    <subcellularLocation>
        <location evidence="1">Cytoplasm</location>
    </subcellularLocation>
</comment>
<comment type="domain">
    <text evidence="1">A Gly-cisPro motif from one monomer fits into the active site of the other monomer to allow specific chiral rejection of L-amino acids.</text>
</comment>
<comment type="similarity">
    <text evidence="1">Belongs to the DTD family.</text>
</comment>